<name>SYMPK_MOUSE</name>
<organism>
    <name type="scientific">Mus musculus</name>
    <name type="common">Mouse</name>
    <dbReference type="NCBI Taxonomy" id="10090"/>
    <lineage>
        <taxon>Eukaryota</taxon>
        <taxon>Metazoa</taxon>
        <taxon>Chordata</taxon>
        <taxon>Craniata</taxon>
        <taxon>Vertebrata</taxon>
        <taxon>Euteleostomi</taxon>
        <taxon>Mammalia</taxon>
        <taxon>Eutheria</taxon>
        <taxon>Euarchontoglires</taxon>
        <taxon>Glires</taxon>
        <taxon>Rodentia</taxon>
        <taxon>Myomorpha</taxon>
        <taxon>Muroidea</taxon>
        <taxon>Muridae</taxon>
        <taxon>Murinae</taxon>
        <taxon>Mus</taxon>
        <taxon>Mus</taxon>
    </lineage>
</organism>
<evidence type="ECO:0000250" key="1"/>
<evidence type="ECO:0000250" key="2">
    <source>
        <dbReference type="UniProtKB" id="Q92797"/>
    </source>
</evidence>
<evidence type="ECO:0000255" key="3"/>
<evidence type="ECO:0000256" key="4">
    <source>
        <dbReference type="SAM" id="MobiDB-lite"/>
    </source>
</evidence>
<evidence type="ECO:0000305" key="5"/>
<evidence type="ECO:0000312" key="6">
    <source>
        <dbReference type="Proteomes" id="UP000000589"/>
    </source>
</evidence>
<evidence type="ECO:0007744" key="7">
    <source>
    </source>
</evidence>
<feature type="chain" id="PRO_0000072386" description="Symplekin">
    <location>
        <begin position="1"/>
        <end position="1288"/>
    </location>
</feature>
<feature type="repeat" description="HEAT 1">
    <location>
        <begin position="31"/>
        <end position="64"/>
    </location>
</feature>
<feature type="repeat" description="HEAT 2">
    <location>
        <begin position="67"/>
        <end position="101"/>
    </location>
</feature>
<feature type="repeat" description="HEAT 3">
    <location>
        <begin position="104"/>
        <end position="146"/>
    </location>
</feature>
<feature type="repeat" description="HEAT 4">
    <location>
        <begin position="153"/>
        <end position="192"/>
    </location>
</feature>
<feature type="repeat" description="HEAT 5">
    <location>
        <begin position="227"/>
        <end position="266"/>
    </location>
</feature>
<feature type="region of interest" description="Interaction with HSF1" evidence="1">
    <location>
        <begin position="1"/>
        <end position="124"/>
    </location>
</feature>
<feature type="region of interest" description="Disordered" evidence="4">
    <location>
        <begin position="335"/>
        <end position="392"/>
    </location>
</feature>
<feature type="region of interest" description="Disordered" evidence="4">
    <location>
        <begin position="1130"/>
        <end position="1151"/>
    </location>
</feature>
<feature type="region of interest" description="Disordered" evidence="4">
    <location>
        <begin position="1163"/>
        <end position="1288"/>
    </location>
</feature>
<feature type="short sequence motif" description="Nuclear localization signal" evidence="3">
    <location>
        <begin position="345"/>
        <end position="360"/>
    </location>
</feature>
<feature type="compositionally biased region" description="Basic and acidic residues" evidence="4">
    <location>
        <begin position="349"/>
        <end position="362"/>
    </location>
</feature>
<feature type="compositionally biased region" description="Polar residues" evidence="4">
    <location>
        <begin position="380"/>
        <end position="392"/>
    </location>
</feature>
<feature type="compositionally biased region" description="Pro residues" evidence="4">
    <location>
        <begin position="1131"/>
        <end position="1149"/>
    </location>
</feature>
<feature type="compositionally biased region" description="Basic and acidic residues" evidence="4">
    <location>
        <begin position="1163"/>
        <end position="1173"/>
    </location>
</feature>
<feature type="compositionally biased region" description="Basic and acidic residues" evidence="4">
    <location>
        <begin position="1267"/>
        <end position="1288"/>
    </location>
</feature>
<feature type="modified residue" description="Phosphoserine" evidence="2">
    <location>
        <position position="13"/>
    </location>
</feature>
<feature type="modified residue" description="Phosphoserine" evidence="2">
    <location>
        <position position="494"/>
    </location>
</feature>
<feature type="modified residue" description="Phosphoserine" evidence="2">
    <location>
        <position position="1238"/>
    </location>
</feature>
<feature type="modified residue" description="Phosphoserine" evidence="2">
    <location>
        <position position="1239"/>
    </location>
</feature>
<feature type="modified residue" description="Phosphoserine" evidence="7">
    <location>
        <position position="1260"/>
    </location>
</feature>
<feature type="modified residue" description="Phosphothreonine" evidence="2">
    <location>
        <position position="1274"/>
    </location>
</feature>
<feature type="modified residue" description="Phosphoserine" evidence="2">
    <location>
        <position position="1276"/>
    </location>
</feature>
<feature type="cross-link" description="Glycyl lysine isopeptide (Lys-Gly) (interchain with G-Cter in SUMO1); alternate" evidence="2">
    <location>
        <position position="361"/>
    </location>
</feature>
<feature type="cross-link" description="Glycyl lysine isopeptide (Lys-Gly) (interchain with G-Cter in SUMO2); alternate" evidence="2">
    <location>
        <position position="361"/>
    </location>
</feature>
<feature type="cross-link" description="Glycyl lysine isopeptide (Lys-Gly) (interchain with G-Cter in SUMO2)" evidence="2">
    <location>
        <position position="483"/>
    </location>
</feature>
<feature type="cross-link" description="Glycyl lysine isopeptide (Lys-Gly) (interchain with G-Cter in SUMO1)" evidence="2">
    <location>
        <position position="1256"/>
    </location>
</feature>
<feature type="sequence conflict" description="In Ref. 2; AAH49852." evidence="5" ref="2">
    <location>
        <begin position="1143"/>
        <end position="1146"/>
    </location>
</feature>
<accession>Q80X82</accession>
<accession>F8WJD4</accession>
<comment type="function">
    <text evidence="1">Scaffold protein that functions as a component of a multimolecular complex involved in histone mRNA 3'-end processing. Specific component of the tight junction (TJ) plaque, but might not be an exclusively junctional component. May have a house-keeping rule. Is involved in pre-mRNA polyadenylation. Enhances SSU72 phosphatase activity (By similarity).</text>
</comment>
<comment type="subunit">
    <text evidence="2">Found in a heat-sensitive complex at least composed of several cleavage and polyadenylation specific and cleavage stimulation factors. Interacts with CPSF2, CPSF3 and CSTF2. Interacts (via N-terminus) with HSF1; this interaction is direct and occurs upon heat shock. Interacts with SSU72.</text>
</comment>
<comment type="subcellular location">
    <subcellularLocation>
        <location evidence="1">Cytoplasm</location>
        <location evidence="1">Cytoskeleton</location>
    </subcellularLocation>
    <subcellularLocation>
        <location evidence="1">Cell junction</location>
        <location evidence="1">Tight junction</location>
    </subcellularLocation>
    <subcellularLocation>
        <location evidence="1">Cell membrane</location>
        <topology evidence="1">Peripheral membrane protein</topology>
        <orientation evidence="1">Cytoplasmic side</orientation>
    </subcellularLocation>
    <subcellularLocation>
        <location evidence="2">Cell junction</location>
    </subcellularLocation>
    <subcellularLocation>
        <location evidence="1">Nucleus</location>
        <location evidence="1">Nucleoplasm</location>
    </subcellularLocation>
    <text evidence="2">Cytoplasmic face of adhesion plaques (major) and nucleoplasm (minor) (in cells with TJ). Nucleoplasm (in cells without TJ). Nuclear bodies of heat-stressed cells. Colocalizes with HSF1 in nuclear stress bodies upon heat shock.</text>
</comment>
<comment type="domain">
    <text>The HEAT repeats have been determined based on 3D-structure analysis of the D.melanogaster ortholog and are not detected by sequence-based prediction programs.</text>
</comment>
<comment type="similarity">
    <text evidence="5">Belongs to the Symplekin family.</text>
</comment>
<dbReference type="EMBL" id="AC170864">
    <property type="status" value="NOT_ANNOTATED_CDS"/>
    <property type="molecule type" value="Genomic_DNA"/>
</dbReference>
<dbReference type="EMBL" id="BC049852">
    <property type="protein sequence ID" value="AAH49852.1"/>
    <property type="molecule type" value="mRNA"/>
</dbReference>
<dbReference type="CCDS" id="CCDS52051.1"/>
<dbReference type="RefSeq" id="NP_080881.2">
    <property type="nucleotide sequence ID" value="NM_026605.2"/>
</dbReference>
<dbReference type="RefSeq" id="XP_006540395.1">
    <property type="nucleotide sequence ID" value="XM_006540332.4"/>
</dbReference>
<dbReference type="SMR" id="Q80X82"/>
<dbReference type="FunCoup" id="Q80X82">
    <property type="interactions" value="4512"/>
</dbReference>
<dbReference type="IntAct" id="Q80X82">
    <property type="interactions" value="1"/>
</dbReference>
<dbReference type="STRING" id="10090.ENSMUSP00000023882"/>
<dbReference type="GlyGen" id="Q80X82">
    <property type="glycosylation" value="1 site"/>
</dbReference>
<dbReference type="iPTMnet" id="Q80X82"/>
<dbReference type="PhosphoSitePlus" id="Q80X82"/>
<dbReference type="SwissPalm" id="Q80X82"/>
<dbReference type="jPOST" id="Q80X82"/>
<dbReference type="PaxDb" id="10090-ENSMUSP00000023882"/>
<dbReference type="PeptideAtlas" id="Q80X82"/>
<dbReference type="ProteomicsDB" id="254735"/>
<dbReference type="ProteomicsDB" id="369449"/>
<dbReference type="Pumba" id="Q80X82"/>
<dbReference type="Antibodypedia" id="18041">
    <property type="antibodies" value="185 antibodies from 29 providers"/>
</dbReference>
<dbReference type="Ensembl" id="ENSMUST00000023882.14">
    <property type="protein sequence ID" value="ENSMUSP00000023882.8"/>
    <property type="gene ID" value="ENSMUSG00000023118.16"/>
</dbReference>
<dbReference type="GeneID" id="68188"/>
<dbReference type="KEGG" id="mmu:68188"/>
<dbReference type="UCSC" id="uc009fkg.2">
    <property type="organism name" value="mouse"/>
</dbReference>
<dbReference type="AGR" id="MGI:1915438"/>
<dbReference type="CTD" id="8189"/>
<dbReference type="MGI" id="MGI:1915438">
    <property type="gene designation" value="Sympk"/>
</dbReference>
<dbReference type="VEuPathDB" id="HostDB:ENSMUSG00000023118"/>
<dbReference type="eggNOG" id="KOG1895">
    <property type="taxonomic scope" value="Eukaryota"/>
</dbReference>
<dbReference type="GeneTree" id="ENSGT00390000017045"/>
<dbReference type="HOGENOM" id="CLU_004756_1_0_1"/>
<dbReference type="InParanoid" id="Q80X82"/>
<dbReference type="OMA" id="NVRYGIM"/>
<dbReference type="OrthoDB" id="331600at2759"/>
<dbReference type="PhylomeDB" id="Q80X82"/>
<dbReference type="TreeFam" id="TF312860"/>
<dbReference type="Reactome" id="R-MMU-159231">
    <property type="pathway name" value="Transport of Mature mRNA Derived from an Intronless Transcript"/>
</dbReference>
<dbReference type="Reactome" id="R-MMU-72187">
    <property type="pathway name" value="mRNA 3'-end processing"/>
</dbReference>
<dbReference type="Reactome" id="R-MMU-72203">
    <property type="pathway name" value="Processing of Capped Intron-Containing Pre-mRNA"/>
</dbReference>
<dbReference type="Reactome" id="R-MMU-73856">
    <property type="pathway name" value="RNA Polymerase II Transcription Termination"/>
</dbReference>
<dbReference type="Reactome" id="R-MMU-77595">
    <property type="pathway name" value="Processing of Intronless Pre-mRNAs"/>
</dbReference>
<dbReference type="BioGRID-ORCS" id="68188">
    <property type="hits" value="23 hits in 77 CRISPR screens"/>
</dbReference>
<dbReference type="CD-CODE" id="50782855">
    <property type="entry name" value="Histone Locus Body"/>
</dbReference>
<dbReference type="ChiTaRS" id="Sympk">
    <property type="organism name" value="mouse"/>
</dbReference>
<dbReference type="PRO" id="PR:Q80X82"/>
<dbReference type="Proteomes" id="UP000000589">
    <property type="component" value="Chromosome 7"/>
</dbReference>
<dbReference type="RNAct" id="Q80X82">
    <property type="molecule type" value="protein"/>
</dbReference>
<dbReference type="Bgee" id="ENSMUSG00000023118">
    <property type="expression patterns" value="Expressed in hindlimb stylopod muscle and 220 other cell types or tissues"/>
</dbReference>
<dbReference type="ExpressionAtlas" id="Q80X82">
    <property type="expression patterns" value="baseline and differential"/>
</dbReference>
<dbReference type="GO" id="GO:0005923">
    <property type="term" value="C:bicellular tight junction"/>
    <property type="evidence" value="ECO:0007669"/>
    <property type="project" value="UniProtKB-SubCell"/>
</dbReference>
<dbReference type="GO" id="GO:0005856">
    <property type="term" value="C:cytoskeleton"/>
    <property type="evidence" value="ECO:0007669"/>
    <property type="project" value="UniProtKB-SubCell"/>
</dbReference>
<dbReference type="GO" id="GO:0005829">
    <property type="term" value="C:cytosol"/>
    <property type="evidence" value="ECO:0007669"/>
    <property type="project" value="Ensembl"/>
</dbReference>
<dbReference type="GO" id="GO:0016604">
    <property type="term" value="C:nuclear body"/>
    <property type="evidence" value="ECO:0000314"/>
    <property type="project" value="MGI"/>
</dbReference>
<dbReference type="GO" id="GO:0097165">
    <property type="term" value="C:nuclear stress granule"/>
    <property type="evidence" value="ECO:0000250"/>
    <property type="project" value="UniProtKB"/>
</dbReference>
<dbReference type="GO" id="GO:0005886">
    <property type="term" value="C:plasma membrane"/>
    <property type="evidence" value="ECO:0007669"/>
    <property type="project" value="UniProtKB-SubCell"/>
</dbReference>
<dbReference type="GO" id="GO:0007155">
    <property type="term" value="P:cell adhesion"/>
    <property type="evidence" value="ECO:0007669"/>
    <property type="project" value="UniProtKB-KW"/>
</dbReference>
<dbReference type="GO" id="GO:0006397">
    <property type="term" value="P:mRNA processing"/>
    <property type="evidence" value="ECO:0007669"/>
    <property type="project" value="UniProtKB-KW"/>
</dbReference>
<dbReference type="GO" id="GO:0032091">
    <property type="term" value="P:negative regulation of protein binding"/>
    <property type="evidence" value="ECO:0000250"/>
    <property type="project" value="UniProtKB"/>
</dbReference>
<dbReference type="FunFam" id="1.25.10.10:FF:000106">
    <property type="entry name" value="Symplekin"/>
    <property type="match status" value="1"/>
</dbReference>
<dbReference type="Gene3D" id="1.25.10.10">
    <property type="entry name" value="Leucine-rich Repeat Variant"/>
    <property type="match status" value="1"/>
</dbReference>
<dbReference type="InterPro" id="IPR011989">
    <property type="entry name" value="ARM-like"/>
</dbReference>
<dbReference type="InterPro" id="IPR016024">
    <property type="entry name" value="ARM-type_fold"/>
</dbReference>
<dbReference type="InterPro" id="IPR021850">
    <property type="entry name" value="Symplekin/Pta1"/>
</dbReference>
<dbReference type="InterPro" id="IPR032460">
    <property type="entry name" value="Symplekin/Pta1_N"/>
</dbReference>
<dbReference type="InterPro" id="IPR022075">
    <property type="entry name" value="Symplekin_C"/>
</dbReference>
<dbReference type="PANTHER" id="PTHR15245:SF20">
    <property type="entry name" value="SYMPLEKIN"/>
    <property type="match status" value="1"/>
</dbReference>
<dbReference type="PANTHER" id="PTHR15245">
    <property type="entry name" value="SYMPLEKIN-RELATED"/>
    <property type="match status" value="1"/>
</dbReference>
<dbReference type="Pfam" id="PF11935">
    <property type="entry name" value="SYMPK_PTA1_N"/>
    <property type="match status" value="1"/>
</dbReference>
<dbReference type="Pfam" id="PF12295">
    <property type="entry name" value="Symplekin_C"/>
    <property type="match status" value="1"/>
</dbReference>
<dbReference type="SUPFAM" id="SSF48371">
    <property type="entry name" value="ARM repeat"/>
    <property type="match status" value="1"/>
</dbReference>
<proteinExistence type="evidence at protein level"/>
<gene>
    <name type="primary">Sympk</name>
</gene>
<sequence>MASSSGDSVTRRSVASQFFTQEEGPSIDGMTTSERVVDLLNQAALITNDSKITVLKQVQELIINKDPTLLDNFLDEIIAFQADKSIEVRKFVIGFIEEACKRDIELLLKLIANLNMLLRDENVNVVKKAILTMTQLYKVALQWMVKSRVISDLQEACWDMVSSMAGEIILLLDSDNDGIRTHAIKFVEGLIVTLSPRMADSEVPRRQEHDISLDRIPRDHPYIQYNVLWEEGKAAVEQLLKFMVHPAISSINLTTALGSLANIARQRPMFMSEVIQAYETLHANLPPTLAKSQVSSVRKNLKLHLLSVLKHPASLEFQAQITTLLVDLGTPQAEIARNMPSSKDSRKRPRDDTDSTLKKMKLEPNLGEDDEDKDLEPGPSGTSKASAQISGQSDTDITAEFLQPLLTPDNVANLVLISMVYLPETMPASFQAIYTPVESAGTEAQIKHLARLMATQMTAAGLGPGVEQTKQCKEEPKEEKVVKPESVLIKRRLSVQGQAISVVGSQSTMSPLEEEVPQAKRRPEPIIPVTQPRLAGAGGRKKIFRLSDVLKPLTDAQVEAMKLGAVKRILRAEKAVACSGAAQVRIKILASLVTQFDSGFKAEVLSFILEDVRARLDLAFAWLYQEYNAYLAAGTSGTLDKYEDCLICLLSGLQEKPDQKDGIFTKVVLEAPLITESALEVIRKYCEDESRAYLGMSTLGDLIFKRPSRQFQYLHVLLDLSSHEKDRVRSQALLFIKRMYEKEQLREYVEKFALNYLQLLVHPNPPSVLFGADKDTEVAAPWTEETVKQCLYLYLALLPQNHKLIHELAAVYTEAIADIKRTVLRVIEQPIRGMGMNSPELLLLVENCPKGAETLVTRCLHSLTDKVPPSPELVKRVRDLYHKRLPDVRFLIPVLNGLEKKEVIQALPKLIKLNPIVVKEVFNRLLGTQHGEGNSALSPLNPGELLIALHNIDSVKCDMKSIIKATNLCFAERNVYTSEVLAVVMQQLMEQSPLPMLLMRTVIQSLTMYPRLGGFVMNILARLIMKQVWKYPKVWEGFIKCCQRTKPQSFQVILQLPPQQLGAVFDKCPELREPLLAHVRSFTPHQQAHIPNSIMTILEATGKQEPEVKEAPSGPLEEDDLEPLALALAPAPAPAPAPAPAPAPAPRPPQDLIGLRLAQEKALKRQLEEEQKQKPTGIGAPAACVSSTPSVPAAARAGPTPAEEVMEYREEGPECETPAIFISMDDDSGLAETTLLDSSLEGPLPKEAAAVGSSSKDERSPQNLSHAVEEALKTSSPETREPESKGNS</sequence>
<keyword id="KW-0130">Cell adhesion</keyword>
<keyword id="KW-0965">Cell junction</keyword>
<keyword id="KW-1003">Cell membrane</keyword>
<keyword id="KW-0963">Cytoplasm</keyword>
<keyword id="KW-0206">Cytoskeleton</keyword>
<keyword id="KW-1017">Isopeptide bond</keyword>
<keyword id="KW-0472">Membrane</keyword>
<keyword id="KW-0507">mRNA processing</keyword>
<keyword id="KW-0539">Nucleus</keyword>
<keyword id="KW-0597">Phosphoprotein</keyword>
<keyword id="KW-1185">Reference proteome</keyword>
<keyword id="KW-0677">Repeat</keyword>
<keyword id="KW-0796">Tight junction</keyword>
<keyword id="KW-0832">Ubl conjugation</keyword>
<protein>
    <recommendedName>
        <fullName>Symplekin</fullName>
    </recommendedName>
</protein>
<reference evidence="6" key="1">
    <citation type="journal article" date="2009" name="PLoS Biol.">
        <title>Lineage-specific biology revealed by a finished genome assembly of the mouse.</title>
        <authorList>
            <person name="Church D.M."/>
            <person name="Goodstadt L."/>
            <person name="Hillier L.W."/>
            <person name="Zody M.C."/>
            <person name="Goldstein S."/>
            <person name="She X."/>
            <person name="Bult C.J."/>
            <person name="Agarwala R."/>
            <person name="Cherry J.L."/>
            <person name="DiCuccio M."/>
            <person name="Hlavina W."/>
            <person name="Kapustin Y."/>
            <person name="Meric P."/>
            <person name="Maglott D."/>
            <person name="Birtle Z."/>
            <person name="Marques A.C."/>
            <person name="Graves T."/>
            <person name="Zhou S."/>
            <person name="Teague B."/>
            <person name="Potamousis K."/>
            <person name="Churas C."/>
            <person name="Place M."/>
            <person name="Herschleb J."/>
            <person name="Runnheim R."/>
            <person name="Forrest D."/>
            <person name="Amos-Landgraf J."/>
            <person name="Schwartz D.C."/>
            <person name="Cheng Z."/>
            <person name="Lindblad-Toh K."/>
            <person name="Eichler E.E."/>
            <person name="Ponting C.P."/>
        </authorList>
    </citation>
    <scope>NUCLEOTIDE SEQUENCE [LARGE SCALE GENOMIC DNA]</scope>
    <source>
        <strain evidence="6">C57BL/6J</strain>
    </source>
</reference>
<reference key="2">
    <citation type="journal article" date="2004" name="Genome Res.">
        <title>The status, quality, and expansion of the NIH full-length cDNA project: the Mammalian Gene Collection (MGC).</title>
        <authorList>
            <consortium name="The MGC Project Team"/>
        </authorList>
    </citation>
    <scope>NUCLEOTIDE SEQUENCE [LARGE SCALE MRNA]</scope>
    <source>
        <strain>FVB/N</strain>
        <tissue>Liver</tissue>
    </source>
</reference>
<reference key="3">
    <citation type="journal article" date="2007" name="Proc. Natl. Acad. Sci. U.S.A.">
        <title>Large-scale phosphorylation analysis of mouse liver.</title>
        <authorList>
            <person name="Villen J."/>
            <person name="Beausoleil S.A."/>
            <person name="Gerber S.A."/>
            <person name="Gygi S.P."/>
        </authorList>
    </citation>
    <scope>IDENTIFICATION BY MASS SPECTROMETRY [LARGE SCALE ANALYSIS]</scope>
    <source>
        <tissue>Liver</tissue>
    </source>
</reference>
<reference key="4">
    <citation type="journal article" date="2010" name="Cell">
        <title>A tissue-specific atlas of mouse protein phosphorylation and expression.</title>
        <authorList>
            <person name="Huttlin E.L."/>
            <person name="Jedrychowski M.P."/>
            <person name="Elias J.E."/>
            <person name="Goswami T."/>
            <person name="Rad R."/>
            <person name="Beausoleil S.A."/>
            <person name="Villen J."/>
            <person name="Haas W."/>
            <person name="Sowa M.E."/>
            <person name="Gygi S.P."/>
        </authorList>
    </citation>
    <scope>PHOSPHORYLATION [LARGE SCALE ANALYSIS] AT SER-1260</scope>
    <scope>IDENTIFICATION BY MASS SPECTROMETRY [LARGE SCALE ANALYSIS]</scope>
    <source>
        <tissue>Brain</tissue>
        <tissue>Brown adipose tissue</tissue>
        <tissue>Heart</tissue>
        <tissue>Kidney</tissue>
        <tissue>Liver</tissue>
        <tissue>Lung</tissue>
        <tissue>Pancreas</tissue>
        <tissue>Spleen</tissue>
        <tissue>Testis</tissue>
    </source>
</reference>